<feature type="chain" id="PRO_0000367615" description="Glutamate--tRNA ligase 2">
    <location>
        <begin position="1"/>
        <end position="450"/>
    </location>
</feature>
<feature type="short sequence motif" description="'HIGH' region" evidence="1">
    <location>
        <begin position="10"/>
        <end position="20"/>
    </location>
</feature>
<feature type="short sequence motif" description="'KMSKS' region" evidence="1">
    <location>
        <begin position="243"/>
        <end position="247"/>
    </location>
</feature>
<feature type="binding site" evidence="1">
    <location>
        <position position="246"/>
    </location>
    <ligand>
        <name>ATP</name>
        <dbReference type="ChEBI" id="CHEBI:30616"/>
    </ligand>
</feature>
<proteinExistence type="inferred from homology"/>
<name>SYE2_BEII9</name>
<organism>
    <name type="scientific">Beijerinckia indica subsp. indica (strain ATCC 9039 / DSM 1715 / NCIMB 8712)</name>
    <dbReference type="NCBI Taxonomy" id="395963"/>
    <lineage>
        <taxon>Bacteria</taxon>
        <taxon>Pseudomonadati</taxon>
        <taxon>Pseudomonadota</taxon>
        <taxon>Alphaproteobacteria</taxon>
        <taxon>Hyphomicrobiales</taxon>
        <taxon>Beijerinckiaceae</taxon>
        <taxon>Beijerinckia</taxon>
    </lineage>
</organism>
<evidence type="ECO:0000255" key="1">
    <source>
        <dbReference type="HAMAP-Rule" id="MF_00022"/>
    </source>
</evidence>
<accession>B2IGY0</accession>
<comment type="function">
    <text evidence="1">Catalyzes the attachment of glutamate to tRNA(Glu) in a two-step reaction: glutamate is first activated by ATP to form Glu-AMP and then transferred to the acceptor end of tRNA(Glu).</text>
</comment>
<comment type="catalytic activity">
    <reaction evidence="1">
        <text>tRNA(Glu) + L-glutamate + ATP = L-glutamyl-tRNA(Glu) + AMP + diphosphate</text>
        <dbReference type="Rhea" id="RHEA:23540"/>
        <dbReference type="Rhea" id="RHEA-COMP:9663"/>
        <dbReference type="Rhea" id="RHEA-COMP:9680"/>
        <dbReference type="ChEBI" id="CHEBI:29985"/>
        <dbReference type="ChEBI" id="CHEBI:30616"/>
        <dbReference type="ChEBI" id="CHEBI:33019"/>
        <dbReference type="ChEBI" id="CHEBI:78442"/>
        <dbReference type="ChEBI" id="CHEBI:78520"/>
        <dbReference type="ChEBI" id="CHEBI:456215"/>
        <dbReference type="EC" id="6.1.1.17"/>
    </reaction>
</comment>
<comment type="subunit">
    <text evidence="1">Monomer.</text>
</comment>
<comment type="subcellular location">
    <subcellularLocation>
        <location evidence="1">Cytoplasm</location>
    </subcellularLocation>
</comment>
<comment type="similarity">
    <text evidence="1">Belongs to the class-I aminoacyl-tRNA synthetase family. Glutamate--tRNA ligase type 1 subfamily.</text>
</comment>
<keyword id="KW-0030">Aminoacyl-tRNA synthetase</keyword>
<keyword id="KW-0067">ATP-binding</keyword>
<keyword id="KW-0963">Cytoplasm</keyword>
<keyword id="KW-0436">Ligase</keyword>
<keyword id="KW-0547">Nucleotide-binding</keyword>
<keyword id="KW-0648">Protein biosynthesis</keyword>
<keyword id="KW-1185">Reference proteome</keyword>
<reference key="1">
    <citation type="journal article" date="2010" name="J. Bacteriol.">
        <title>Complete genome sequence of Beijerinckia indica subsp. indica.</title>
        <authorList>
            <person name="Tamas I."/>
            <person name="Dedysh S.N."/>
            <person name="Liesack W."/>
            <person name="Stott M.B."/>
            <person name="Alam M."/>
            <person name="Murrell J.C."/>
            <person name="Dunfield P.F."/>
        </authorList>
    </citation>
    <scope>NUCLEOTIDE SEQUENCE [LARGE SCALE GENOMIC DNA]</scope>
    <source>
        <strain>ATCC 9039 / DSM 1715 / NCIMB 8712</strain>
    </source>
</reference>
<sequence length="450" mass="50098">MSHPIVRFAPSPTGRIHIGNARPALLNFLFARKYHGEFILRFDDTDLERSKEEYAASIEVDLAWLGITPDRTLRQSQRFALYREAAEVLRSKGRLYPCYETAEELDRKRKRQQARGLPPIYDRAALALSEADRAKLEAEGRRPHWRFKLDPGIARWDDLIRGESHIDAASLSDPILLREDGSYLYTLPSVVDDIDCKITHVIRGEDHVTNTAVQIQLFEALAGHGHVPVFGHHNLLSSASGEGFSKRTGSLSIGSLRDQGFESLAVAAAAVLTGSSVAVHPVKSLDELVAGFDLASLSRTQARFDPAELANLSARTLHQLDFETVRDRLAAHDITGYKAKAFWEAVRGNLTVFLDCIDWWRVVEGEIPPVTEDTAFLDLAKNNLPEEPWDEKAWSSWTGRLKDQTGRKGKALFHPLRLALTGRETGPELAALLPLIGRLKATARLSGHVA</sequence>
<dbReference type="EC" id="6.1.1.17" evidence="1"/>
<dbReference type="EMBL" id="CP001016">
    <property type="protein sequence ID" value="ACB97226.1"/>
    <property type="molecule type" value="Genomic_DNA"/>
</dbReference>
<dbReference type="RefSeq" id="WP_012386574.1">
    <property type="nucleotide sequence ID" value="NC_010581.1"/>
</dbReference>
<dbReference type="SMR" id="B2IGY0"/>
<dbReference type="STRING" id="395963.Bind_3674"/>
<dbReference type="KEGG" id="bid:Bind_3674"/>
<dbReference type="eggNOG" id="COG0008">
    <property type="taxonomic scope" value="Bacteria"/>
</dbReference>
<dbReference type="HOGENOM" id="CLU_015768_6_1_5"/>
<dbReference type="OrthoDB" id="9807503at2"/>
<dbReference type="Proteomes" id="UP000001695">
    <property type="component" value="Chromosome"/>
</dbReference>
<dbReference type="GO" id="GO:0005737">
    <property type="term" value="C:cytoplasm"/>
    <property type="evidence" value="ECO:0007669"/>
    <property type="project" value="UniProtKB-SubCell"/>
</dbReference>
<dbReference type="GO" id="GO:0005524">
    <property type="term" value="F:ATP binding"/>
    <property type="evidence" value="ECO:0007669"/>
    <property type="project" value="UniProtKB-UniRule"/>
</dbReference>
<dbReference type="GO" id="GO:0004818">
    <property type="term" value="F:glutamate-tRNA ligase activity"/>
    <property type="evidence" value="ECO:0007669"/>
    <property type="project" value="UniProtKB-UniRule"/>
</dbReference>
<dbReference type="GO" id="GO:0000049">
    <property type="term" value="F:tRNA binding"/>
    <property type="evidence" value="ECO:0007669"/>
    <property type="project" value="InterPro"/>
</dbReference>
<dbReference type="GO" id="GO:0006424">
    <property type="term" value="P:glutamyl-tRNA aminoacylation"/>
    <property type="evidence" value="ECO:0007669"/>
    <property type="project" value="UniProtKB-UniRule"/>
</dbReference>
<dbReference type="Gene3D" id="1.10.10.350">
    <property type="match status" value="1"/>
</dbReference>
<dbReference type="Gene3D" id="3.40.50.620">
    <property type="entry name" value="HUPs"/>
    <property type="match status" value="1"/>
</dbReference>
<dbReference type="HAMAP" id="MF_00022">
    <property type="entry name" value="Glu_tRNA_synth_type1"/>
    <property type="match status" value="1"/>
</dbReference>
<dbReference type="InterPro" id="IPR045462">
    <property type="entry name" value="aa-tRNA-synth_I_cd-bd"/>
</dbReference>
<dbReference type="InterPro" id="IPR020751">
    <property type="entry name" value="aa-tRNA-synth_I_codon-bd_sub2"/>
</dbReference>
<dbReference type="InterPro" id="IPR001412">
    <property type="entry name" value="aa-tRNA-synth_I_CS"/>
</dbReference>
<dbReference type="InterPro" id="IPR008925">
    <property type="entry name" value="aa_tRNA-synth_I_cd-bd_sf"/>
</dbReference>
<dbReference type="InterPro" id="IPR004527">
    <property type="entry name" value="Glu-tRNA-ligase_bac/mito"/>
</dbReference>
<dbReference type="InterPro" id="IPR000924">
    <property type="entry name" value="Glu/Gln-tRNA-synth"/>
</dbReference>
<dbReference type="InterPro" id="IPR020058">
    <property type="entry name" value="Glu/Gln-tRNA-synth_Ib_cat-dom"/>
</dbReference>
<dbReference type="InterPro" id="IPR049940">
    <property type="entry name" value="GluQ/Sye"/>
</dbReference>
<dbReference type="InterPro" id="IPR014729">
    <property type="entry name" value="Rossmann-like_a/b/a_fold"/>
</dbReference>
<dbReference type="NCBIfam" id="TIGR00464">
    <property type="entry name" value="gltX_bact"/>
    <property type="match status" value="1"/>
</dbReference>
<dbReference type="PANTHER" id="PTHR43311">
    <property type="entry name" value="GLUTAMATE--TRNA LIGASE"/>
    <property type="match status" value="1"/>
</dbReference>
<dbReference type="PANTHER" id="PTHR43311:SF2">
    <property type="entry name" value="GLUTAMATE--TRNA LIGASE, MITOCHONDRIAL-RELATED"/>
    <property type="match status" value="1"/>
</dbReference>
<dbReference type="Pfam" id="PF19269">
    <property type="entry name" value="Anticodon_2"/>
    <property type="match status" value="1"/>
</dbReference>
<dbReference type="Pfam" id="PF00749">
    <property type="entry name" value="tRNA-synt_1c"/>
    <property type="match status" value="1"/>
</dbReference>
<dbReference type="PRINTS" id="PR00987">
    <property type="entry name" value="TRNASYNTHGLU"/>
</dbReference>
<dbReference type="SUPFAM" id="SSF48163">
    <property type="entry name" value="An anticodon-binding domain of class I aminoacyl-tRNA synthetases"/>
    <property type="match status" value="1"/>
</dbReference>
<dbReference type="SUPFAM" id="SSF52374">
    <property type="entry name" value="Nucleotidylyl transferase"/>
    <property type="match status" value="1"/>
</dbReference>
<dbReference type="PROSITE" id="PS00178">
    <property type="entry name" value="AA_TRNA_LIGASE_I"/>
    <property type="match status" value="1"/>
</dbReference>
<protein>
    <recommendedName>
        <fullName evidence="1">Glutamate--tRNA ligase 2</fullName>
        <ecNumber evidence="1">6.1.1.17</ecNumber>
    </recommendedName>
    <alternativeName>
        <fullName evidence="1">Glutamyl-tRNA synthetase 2</fullName>
        <shortName evidence="1">GluRS 2</shortName>
    </alternativeName>
</protein>
<gene>
    <name evidence="1" type="primary">gltX2</name>
    <name type="ordered locus">Bind_3674</name>
</gene>